<gene>
    <name evidence="1" type="primary">rplF</name>
    <name type="ordered locus">Bcep1808_0345</name>
</gene>
<accession>A4JAQ5</accession>
<name>RL6_BURVG</name>
<sequence length="176" mass="18718">MSRVGKSPIALQGAEVKLADGAITVKGPLGTITQPVNPLVNVANNDGTLNLAPVNESREANAMSGTMRAIIANAVHGVTKGFERKLTLVGVGYRAQAQGDKLNLSLGFSHPVVHQMPEGVKAETPTQTEIVIKGINKQQVGQVAAEVRGYRPPEPYKGKGVRYSDEVVILKETKKK</sequence>
<dbReference type="EMBL" id="CP000614">
    <property type="protein sequence ID" value="ABO53358.1"/>
    <property type="molecule type" value="Genomic_DNA"/>
</dbReference>
<dbReference type="SMR" id="A4JAQ5"/>
<dbReference type="KEGG" id="bvi:Bcep1808_0345"/>
<dbReference type="eggNOG" id="COG0097">
    <property type="taxonomic scope" value="Bacteria"/>
</dbReference>
<dbReference type="HOGENOM" id="CLU_065464_1_2_4"/>
<dbReference type="Proteomes" id="UP000002287">
    <property type="component" value="Chromosome 1"/>
</dbReference>
<dbReference type="GO" id="GO:0022625">
    <property type="term" value="C:cytosolic large ribosomal subunit"/>
    <property type="evidence" value="ECO:0007669"/>
    <property type="project" value="TreeGrafter"/>
</dbReference>
<dbReference type="GO" id="GO:0019843">
    <property type="term" value="F:rRNA binding"/>
    <property type="evidence" value="ECO:0007669"/>
    <property type="project" value="UniProtKB-UniRule"/>
</dbReference>
<dbReference type="GO" id="GO:0003735">
    <property type="term" value="F:structural constituent of ribosome"/>
    <property type="evidence" value="ECO:0007669"/>
    <property type="project" value="InterPro"/>
</dbReference>
<dbReference type="GO" id="GO:0002181">
    <property type="term" value="P:cytoplasmic translation"/>
    <property type="evidence" value="ECO:0007669"/>
    <property type="project" value="TreeGrafter"/>
</dbReference>
<dbReference type="FunFam" id="3.90.930.12:FF:000001">
    <property type="entry name" value="50S ribosomal protein L6"/>
    <property type="match status" value="1"/>
</dbReference>
<dbReference type="Gene3D" id="3.90.930.12">
    <property type="entry name" value="Ribosomal protein L6, alpha-beta domain"/>
    <property type="match status" value="2"/>
</dbReference>
<dbReference type="HAMAP" id="MF_01365_B">
    <property type="entry name" value="Ribosomal_uL6_B"/>
    <property type="match status" value="1"/>
</dbReference>
<dbReference type="InterPro" id="IPR000702">
    <property type="entry name" value="Ribosomal_uL6-like"/>
</dbReference>
<dbReference type="InterPro" id="IPR036789">
    <property type="entry name" value="Ribosomal_uL6-like_a/b-dom_sf"/>
</dbReference>
<dbReference type="InterPro" id="IPR020040">
    <property type="entry name" value="Ribosomal_uL6_a/b-dom"/>
</dbReference>
<dbReference type="InterPro" id="IPR019906">
    <property type="entry name" value="Ribosomal_uL6_bac-type"/>
</dbReference>
<dbReference type="InterPro" id="IPR002358">
    <property type="entry name" value="Ribosomal_uL6_CS"/>
</dbReference>
<dbReference type="NCBIfam" id="TIGR03654">
    <property type="entry name" value="L6_bact"/>
    <property type="match status" value="1"/>
</dbReference>
<dbReference type="PANTHER" id="PTHR11655">
    <property type="entry name" value="60S/50S RIBOSOMAL PROTEIN L6/L9"/>
    <property type="match status" value="1"/>
</dbReference>
<dbReference type="PANTHER" id="PTHR11655:SF14">
    <property type="entry name" value="LARGE RIBOSOMAL SUBUNIT PROTEIN UL6M"/>
    <property type="match status" value="1"/>
</dbReference>
<dbReference type="Pfam" id="PF00347">
    <property type="entry name" value="Ribosomal_L6"/>
    <property type="match status" value="2"/>
</dbReference>
<dbReference type="PIRSF" id="PIRSF002162">
    <property type="entry name" value="Ribosomal_L6"/>
    <property type="match status" value="1"/>
</dbReference>
<dbReference type="PRINTS" id="PR00059">
    <property type="entry name" value="RIBOSOMALL6"/>
</dbReference>
<dbReference type="SUPFAM" id="SSF56053">
    <property type="entry name" value="Ribosomal protein L6"/>
    <property type="match status" value="2"/>
</dbReference>
<dbReference type="PROSITE" id="PS00525">
    <property type="entry name" value="RIBOSOMAL_L6_1"/>
    <property type="match status" value="1"/>
</dbReference>
<keyword id="KW-0687">Ribonucleoprotein</keyword>
<keyword id="KW-0689">Ribosomal protein</keyword>
<keyword id="KW-0694">RNA-binding</keyword>
<keyword id="KW-0699">rRNA-binding</keyword>
<organism>
    <name type="scientific">Burkholderia vietnamiensis (strain G4 / LMG 22486)</name>
    <name type="common">Burkholderia cepacia (strain R1808)</name>
    <dbReference type="NCBI Taxonomy" id="269482"/>
    <lineage>
        <taxon>Bacteria</taxon>
        <taxon>Pseudomonadati</taxon>
        <taxon>Pseudomonadota</taxon>
        <taxon>Betaproteobacteria</taxon>
        <taxon>Burkholderiales</taxon>
        <taxon>Burkholderiaceae</taxon>
        <taxon>Burkholderia</taxon>
        <taxon>Burkholderia cepacia complex</taxon>
    </lineage>
</organism>
<feature type="chain" id="PRO_1000055209" description="Large ribosomal subunit protein uL6">
    <location>
        <begin position="1"/>
        <end position="176"/>
    </location>
</feature>
<comment type="function">
    <text evidence="1">This protein binds to the 23S rRNA, and is important in its secondary structure. It is located near the subunit interface in the base of the L7/L12 stalk, and near the tRNA binding site of the peptidyltransferase center.</text>
</comment>
<comment type="subunit">
    <text evidence="1">Part of the 50S ribosomal subunit.</text>
</comment>
<comment type="similarity">
    <text evidence="1">Belongs to the universal ribosomal protein uL6 family.</text>
</comment>
<reference key="1">
    <citation type="submission" date="2007-03" db="EMBL/GenBank/DDBJ databases">
        <title>Complete sequence of chromosome 1 of Burkholderia vietnamiensis G4.</title>
        <authorList>
            <consortium name="US DOE Joint Genome Institute"/>
            <person name="Copeland A."/>
            <person name="Lucas S."/>
            <person name="Lapidus A."/>
            <person name="Barry K."/>
            <person name="Detter J.C."/>
            <person name="Glavina del Rio T."/>
            <person name="Hammon N."/>
            <person name="Israni S."/>
            <person name="Dalin E."/>
            <person name="Tice H."/>
            <person name="Pitluck S."/>
            <person name="Chain P."/>
            <person name="Malfatti S."/>
            <person name="Shin M."/>
            <person name="Vergez L."/>
            <person name="Schmutz J."/>
            <person name="Larimer F."/>
            <person name="Land M."/>
            <person name="Hauser L."/>
            <person name="Kyrpides N."/>
            <person name="Tiedje J."/>
            <person name="Richardson P."/>
        </authorList>
    </citation>
    <scope>NUCLEOTIDE SEQUENCE [LARGE SCALE GENOMIC DNA]</scope>
    <source>
        <strain>G4 / LMG 22486</strain>
    </source>
</reference>
<protein>
    <recommendedName>
        <fullName evidence="1">Large ribosomal subunit protein uL6</fullName>
    </recommendedName>
    <alternativeName>
        <fullName evidence="2">50S ribosomal protein L6</fullName>
    </alternativeName>
</protein>
<proteinExistence type="inferred from homology"/>
<evidence type="ECO:0000255" key="1">
    <source>
        <dbReference type="HAMAP-Rule" id="MF_01365"/>
    </source>
</evidence>
<evidence type="ECO:0000305" key="2"/>